<feature type="chain" id="PRO_0000117088" description="tRNA uridine 5-carboxymethylaminomethyl modification enzyme MnmG">
    <location>
        <begin position="1"/>
        <end position="630"/>
    </location>
</feature>
<feature type="binding site" evidence="1">
    <location>
        <begin position="14"/>
        <end position="19"/>
    </location>
    <ligand>
        <name>FAD</name>
        <dbReference type="ChEBI" id="CHEBI:57692"/>
    </ligand>
</feature>
<feature type="binding site" evidence="1">
    <location>
        <begin position="273"/>
        <end position="287"/>
    </location>
    <ligand>
        <name>NAD(+)</name>
        <dbReference type="ChEBI" id="CHEBI:57540"/>
    </ligand>
</feature>
<proteinExistence type="inferred from homology"/>
<reference key="1">
    <citation type="journal article" date="2002" name="Proc. Natl. Acad. Sci. U.S.A.">
        <title>Complete genome sequence of Clostridium perfringens, an anaerobic flesh-eater.</title>
        <authorList>
            <person name="Shimizu T."/>
            <person name="Ohtani K."/>
            <person name="Hirakawa H."/>
            <person name="Ohshima K."/>
            <person name="Yamashita A."/>
            <person name="Shiba T."/>
            <person name="Ogasawara N."/>
            <person name="Hattori M."/>
            <person name="Kuhara S."/>
            <person name="Hayashi H."/>
        </authorList>
    </citation>
    <scope>NUCLEOTIDE SEQUENCE [LARGE SCALE GENOMIC DNA]</scope>
    <source>
        <strain>13 / Type A</strain>
    </source>
</reference>
<gene>
    <name evidence="1" type="primary">mnmG</name>
    <name evidence="1" type="synonym">gidA</name>
    <name type="ordered locus">CPE2654</name>
</gene>
<sequence>MRYNAGSYDIVVIGAGHAGCEAGLAAARMGCKTLVCTLTLDSVAMMPCNPNIGGTAKGHLVREIDALGGEMGVNIDHTFIQSKMLNTSKGPAVHSLRAQADKKKYQERMKKVLETQENLHLRQLEVVSVEVEDGKVKGVLTKNGAFFECKAVIMTSGTYLQSRIIIGDVSYSQGPNGLSNANELSKSLIDLGIDLRRFKTGTPARINKRSVDFSKMIEQPGDEEIIPFSFISGNIDRDQVSCWLTYTNEETHKVIQENIHRSPMYNGSIKGVGPRYCPSIEDKVMRFQDKDRHQIFIEPEGDDTEEMYVGGMSSSLPEDVQVQMIKTVPGLENAEIMRTAYAIEYDCIDPTQLKASLEFKNIDGFFSAGQINGSSGYEEAGAQGIVAGINAALKVQGKDPMILTRSDGYVGVLIDDLITKGTNEPYRMMTSRAEYRLLLRQDNADFRLTEIGHNVGLVTEERWNKFKERKQNLERELERLKELQITNKTENNEKIVELGSTELKKPIRMYELIKRPELDYFSLACLDPERPDLPKDIGDQINIIARYEGYIQTQLEQVAQFKKFEKKVLPEDLDYNDVNSLRIEAIQKLNKIRPLNIGQASRISGVSPADISVLLIFLEHYRKTGKNTDN</sequence>
<dbReference type="EMBL" id="BA000016">
    <property type="protein sequence ID" value="BAB82360.1"/>
    <property type="molecule type" value="Genomic_DNA"/>
</dbReference>
<dbReference type="RefSeq" id="WP_011011003.1">
    <property type="nucleotide sequence ID" value="NC_003366.1"/>
</dbReference>
<dbReference type="SMR" id="Q8XH31"/>
<dbReference type="STRING" id="195102.gene:10491998"/>
<dbReference type="KEGG" id="cpe:CPE2654"/>
<dbReference type="HOGENOM" id="CLU_007831_2_2_9"/>
<dbReference type="Proteomes" id="UP000000818">
    <property type="component" value="Chromosome"/>
</dbReference>
<dbReference type="GO" id="GO:0005829">
    <property type="term" value="C:cytosol"/>
    <property type="evidence" value="ECO:0007669"/>
    <property type="project" value="TreeGrafter"/>
</dbReference>
<dbReference type="GO" id="GO:0050660">
    <property type="term" value="F:flavin adenine dinucleotide binding"/>
    <property type="evidence" value="ECO:0007669"/>
    <property type="project" value="UniProtKB-UniRule"/>
</dbReference>
<dbReference type="GO" id="GO:0030488">
    <property type="term" value="P:tRNA methylation"/>
    <property type="evidence" value="ECO:0007669"/>
    <property type="project" value="TreeGrafter"/>
</dbReference>
<dbReference type="GO" id="GO:0002098">
    <property type="term" value="P:tRNA wobble uridine modification"/>
    <property type="evidence" value="ECO:0007669"/>
    <property type="project" value="InterPro"/>
</dbReference>
<dbReference type="FunFam" id="1.10.10.1800:FF:000001">
    <property type="entry name" value="tRNA uridine 5-carboxymethylaminomethyl modification enzyme MnmG"/>
    <property type="match status" value="1"/>
</dbReference>
<dbReference type="FunFam" id="1.10.150.570:FF:000001">
    <property type="entry name" value="tRNA uridine 5-carboxymethylaminomethyl modification enzyme MnmG"/>
    <property type="match status" value="1"/>
</dbReference>
<dbReference type="FunFam" id="3.50.50.60:FF:000002">
    <property type="entry name" value="tRNA uridine 5-carboxymethylaminomethyl modification enzyme MnmG"/>
    <property type="match status" value="1"/>
</dbReference>
<dbReference type="FunFam" id="3.50.50.60:FF:000063">
    <property type="entry name" value="tRNA uridine 5-carboxymethylaminomethyl modification enzyme MnmG"/>
    <property type="match status" value="1"/>
</dbReference>
<dbReference type="Gene3D" id="3.50.50.60">
    <property type="entry name" value="FAD/NAD(P)-binding domain"/>
    <property type="match status" value="2"/>
</dbReference>
<dbReference type="Gene3D" id="1.10.150.570">
    <property type="entry name" value="GidA associated domain, C-terminal subdomain"/>
    <property type="match status" value="1"/>
</dbReference>
<dbReference type="Gene3D" id="1.10.10.1800">
    <property type="entry name" value="tRNA uridine 5-carboxymethylaminomethyl modification enzyme MnmG/GidA"/>
    <property type="match status" value="1"/>
</dbReference>
<dbReference type="HAMAP" id="MF_00129">
    <property type="entry name" value="MnmG_GidA"/>
    <property type="match status" value="1"/>
</dbReference>
<dbReference type="InterPro" id="IPR036188">
    <property type="entry name" value="FAD/NAD-bd_sf"/>
</dbReference>
<dbReference type="InterPro" id="IPR049312">
    <property type="entry name" value="GIDA_C_N"/>
</dbReference>
<dbReference type="InterPro" id="IPR004416">
    <property type="entry name" value="MnmG"/>
</dbReference>
<dbReference type="InterPro" id="IPR002218">
    <property type="entry name" value="MnmG-rel"/>
</dbReference>
<dbReference type="InterPro" id="IPR020595">
    <property type="entry name" value="MnmG-rel_CS"/>
</dbReference>
<dbReference type="InterPro" id="IPR026904">
    <property type="entry name" value="MnmG_C"/>
</dbReference>
<dbReference type="InterPro" id="IPR047001">
    <property type="entry name" value="MnmG_C_subdom"/>
</dbReference>
<dbReference type="InterPro" id="IPR044920">
    <property type="entry name" value="MnmG_C_subdom_sf"/>
</dbReference>
<dbReference type="InterPro" id="IPR040131">
    <property type="entry name" value="MnmG_N"/>
</dbReference>
<dbReference type="NCBIfam" id="TIGR00136">
    <property type="entry name" value="mnmG_gidA"/>
    <property type="match status" value="1"/>
</dbReference>
<dbReference type="PANTHER" id="PTHR11806">
    <property type="entry name" value="GLUCOSE INHIBITED DIVISION PROTEIN A"/>
    <property type="match status" value="1"/>
</dbReference>
<dbReference type="PANTHER" id="PTHR11806:SF0">
    <property type="entry name" value="PROTEIN MTO1 HOMOLOG, MITOCHONDRIAL"/>
    <property type="match status" value="1"/>
</dbReference>
<dbReference type="Pfam" id="PF01134">
    <property type="entry name" value="GIDA"/>
    <property type="match status" value="1"/>
</dbReference>
<dbReference type="Pfam" id="PF21680">
    <property type="entry name" value="GIDA_C_1st"/>
    <property type="match status" value="1"/>
</dbReference>
<dbReference type="Pfam" id="PF13932">
    <property type="entry name" value="SAM_GIDA_C"/>
    <property type="match status" value="1"/>
</dbReference>
<dbReference type="SMART" id="SM01228">
    <property type="entry name" value="GIDA_assoc_3"/>
    <property type="match status" value="1"/>
</dbReference>
<dbReference type="SUPFAM" id="SSF51905">
    <property type="entry name" value="FAD/NAD(P)-binding domain"/>
    <property type="match status" value="1"/>
</dbReference>
<dbReference type="PROSITE" id="PS01280">
    <property type="entry name" value="GIDA_1"/>
    <property type="match status" value="1"/>
</dbReference>
<dbReference type="PROSITE" id="PS01281">
    <property type="entry name" value="GIDA_2"/>
    <property type="match status" value="1"/>
</dbReference>
<comment type="function">
    <text evidence="1">NAD-binding protein involved in the addition of a carboxymethylaminomethyl (cmnm) group at the wobble position (U34) of certain tRNAs, forming tRNA-cmnm(5)s(2)U34.</text>
</comment>
<comment type="cofactor">
    <cofactor evidence="1">
        <name>FAD</name>
        <dbReference type="ChEBI" id="CHEBI:57692"/>
    </cofactor>
</comment>
<comment type="subunit">
    <text evidence="1">Homodimer. Heterotetramer of two MnmE and two MnmG subunits.</text>
</comment>
<comment type="subcellular location">
    <subcellularLocation>
        <location evidence="1">Cytoplasm</location>
    </subcellularLocation>
</comment>
<comment type="similarity">
    <text evidence="1">Belongs to the MnmG family.</text>
</comment>
<accession>Q8XH31</accession>
<organism>
    <name type="scientific">Clostridium perfringens (strain 13 / Type A)</name>
    <dbReference type="NCBI Taxonomy" id="195102"/>
    <lineage>
        <taxon>Bacteria</taxon>
        <taxon>Bacillati</taxon>
        <taxon>Bacillota</taxon>
        <taxon>Clostridia</taxon>
        <taxon>Eubacteriales</taxon>
        <taxon>Clostridiaceae</taxon>
        <taxon>Clostridium</taxon>
    </lineage>
</organism>
<evidence type="ECO:0000255" key="1">
    <source>
        <dbReference type="HAMAP-Rule" id="MF_00129"/>
    </source>
</evidence>
<protein>
    <recommendedName>
        <fullName evidence="1">tRNA uridine 5-carboxymethylaminomethyl modification enzyme MnmG</fullName>
    </recommendedName>
    <alternativeName>
        <fullName evidence="1">Glucose-inhibited division protein A</fullName>
    </alternativeName>
</protein>
<name>MNMG_CLOPE</name>
<keyword id="KW-0963">Cytoplasm</keyword>
<keyword id="KW-0274">FAD</keyword>
<keyword id="KW-0285">Flavoprotein</keyword>
<keyword id="KW-0520">NAD</keyword>
<keyword id="KW-1185">Reference proteome</keyword>
<keyword id="KW-0819">tRNA processing</keyword>